<comment type="function">
    <text evidence="1">Catalyzes the oxidation of 5,10-methylenetetrahydrofolate to 5,10-methenyltetrahydrofolate and then the hydrolysis of 5,10-methenyltetrahydrofolate to 10-formyltetrahydrofolate.</text>
</comment>
<comment type="catalytic activity">
    <reaction evidence="1">
        <text>(6R)-5,10-methylene-5,6,7,8-tetrahydrofolate + NADP(+) = (6R)-5,10-methenyltetrahydrofolate + NADPH</text>
        <dbReference type="Rhea" id="RHEA:22812"/>
        <dbReference type="ChEBI" id="CHEBI:15636"/>
        <dbReference type="ChEBI" id="CHEBI:57455"/>
        <dbReference type="ChEBI" id="CHEBI:57783"/>
        <dbReference type="ChEBI" id="CHEBI:58349"/>
        <dbReference type="EC" id="1.5.1.5"/>
    </reaction>
</comment>
<comment type="catalytic activity">
    <reaction evidence="1">
        <text>(6R)-5,10-methenyltetrahydrofolate + H2O = (6R)-10-formyltetrahydrofolate + H(+)</text>
        <dbReference type="Rhea" id="RHEA:23700"/>
        <dbReference type="ChEBI" id="CHEBI:15377"/>
        <dbReference type="ChEBI" id="CHEBI:15378"/>
        <dbReference type="ChEBI" id="CHEBI:57455"/>
        <dbReference type="ChEBI" id="CHEBI:195366"/>
        <dbReference type="EC" id="3.5.4.9"/>
    </reaction>
</comment>
<comment type="pathway">
    <text evidence="1">One-carbon metabolism; tetrahydrofolate interconversion.</text>
</comment>
<comment type="subunit">
    <text evidence="1">Homodimer.</text>
</comment>
<comment type="similarity">
    <text evidence="1">Belongs to the tetrahydrofolate dehydrogenase/cyclohydrolase family.</text>
</comment>
<protein>
    <recommendedName>
        <fullName evidence="1">Bifunctional protein FolD</fullName>
    </recommendedName>
    <domain>
        <recommendedName>
            <fullName evidence="1">Methylenetetrahydrofolate dehydrogenase</fullName>
            <ecNumber evidence="1">1.5.1.5</ecNumber>
        </recommendedName>
    </domain>
    <domain>
        <recommendedName>
            <fullName evidence="1">Methenyltetrahydrofolate cyclohydrolase</fullName>
            <ecNumber evidence="1">3.5.4.9</ecNumber>
        </recommendedName>
    </domain>
</protein>
<dbReference type="EC" id="1.5.1.5" evidence="1"/>
<dbReference type="EC" id="3.5.4.9" evidence="1"/>
<dbReference type="EMBL" id="AE001273">
    <property type="protein sequence ID" value="AAC67669.1"/>
    <property type="molecule type" value="Genomic_DNA"/>
</dbReference>
<dbReference type="PIR" id="H71559">
    <property type="entry name" value="H71559"/>
</dbReference>
<dbReference type="RefSeq" id="NP_219581.1">
    <property type="nucleotide sequence ID" value="NC_000117.1"/>
</dbReference>
<dbReference type="RefSeq" id="WP_009871427.1">
    <property type="nucleotide sequence ID" value="NC_000117.1"/>
</dbReference>
<dbReference type="SMR" id="O84081"/>
<dbReference type="FunCoup" id="O84081">
    <property type="interactions" value="207"/>
</dbReference>
<dbReference type="STRING" id="272561.CT_078"/>
<dbReference type="EnsemblBacteria" id="AAC67669">
    <property type="protein sequence ID" value="AAC67669"/>
    <property type="gene ID" value="CT_078"/>
</dbReference>
<dbReference type="GeneID" id="884128"/>
<dbReference type="KEGG" id="ctr:CT_078"/>
<dbReference type="PATRIC" id="fig|272561.5.peg.87"/>
<dbReference type="HOGENOM" id="CLU_034045_2_0_0"/>
<dbReference type="InParanoid" id="O84081"/>
<dbReference type="OrthoDB" id="9803580at2"/>
<dbReference type="UniPathway" id="UPA00193"/>
<dbReference type="Proteomes" id="UP000000431">
    <property type="component" value="Chromosome"/>
</dbReference>
<dbReference type="GO" id="GO:0005829">
    <property type="term" value="C:cytosol"/>
    <property type="evidence" value="ECO:0000318"/>
    <property type="project" value="GO_Central"/>
</dbReference>
<dbReference type="GO" id="GO:0004477">
    <property type="term" value="F:methenyltetrahydrofolate cyclohydrolase activity"/>
    <property type="evidence" value="ECO:0000318"/>
    <property type="project" value="GO_Central"/>
</dbReference>
<dbReference type="GO" id="GO:0004488">
    <property type="term" value="F:methylenetetrahydrofolate dehydrogenase (NADP+) activity"/>
    <property type="evidence" value="ECO:0000318"/>
    <property type="project" value="GO_Central"/>
</dbReference>
<dbReference type="GO" id="GO:0000105">
    <property type="term" value="P:L-histidine biosynthetic process"/>
    <property type="evidence" value="ECO:0007669"/>
    <property type="project" value="UniProtKB-KW"/>
</dbReference>
<dbReference type="GO" id="GO:0009086">
    <property type="term" value="P:methionine biosynthetic process"/>
    <property type="evidence" value="ECO:0007669"/>
    <property type="project" value="UniProtKB-KW"/>
</dbReference>
<dbReference type="GO" id="GO:0006164">
    <property type="term" value="P:purine nucleotide biosynthetic process"/>
    <property type="evidence" value="ECO:0007669"/>
    <property type="project" value="UniProtKB-KW"/>
</dbReference>
<dbReference type="GO" id="GO:0035999">
    <property type="term" value="P:tetrahydrofolate interconversion"/>
    <property type="evidence" value="ECO:0000318"/>
    <property type="project" value="GO_Central"/>
</dbReference>
<dbReference type="CDD" id="cd01080">
    <property type="entry name" value="NAD_bind_m-THF_DH_Cyclohyd"/>
    <property type="match status" value="1"/>
</dbReference>
<dbReference type="FunFam" id="3.40.50.720:FF:000094">
    <property type="entry name" value="Bifunctional protein FolD"/>
    <property type="match status" value="1"/>
</dbReference>
<dbReference type="FunFam" id="3.40.50.10860:FF:000005">
    <property type="entry name" value="C-1-tetrahydrofolate synthase, cytoplasmic, putative"/>
    <property type="match status" value="1"/>
</dbReference>
<dbReference type="Gene3D" id="3.40.50.10860">
    <property type="entry name" value="Leucine Dehydrogenase, chain A, domain 1"/>
    <property type="match status" value="1"/>
</dbReference>
<dbReference type="Gene3D" id="3.40.50.720">
    <property type="entry name" value="NAD(P)-binding Rossmann-like Domain"/>
    <property type="match status" value="1"/>
</dbReference>
<dbReference type="HAMAP" id="MF_01576">
    <property type="entry name" value="THF_DHG_CYH"/>
    <property type="match status" value="1"/>
</dbReference>
<dbReference type="InterPro" id="IPR046346">
    <property type="entry name" value="Aminoacid_DH-like_N_sf"/>
</dbReference>
<dbReference type="InterPro" id="IPR036291">
    <property type="entry name" value="NAD(P)-bd_dom_sf"/>
</dbReference>
<dbReference type="InterPro" id="IPR000672">
    <property type="entry name" value="THF_DH/CycHdrlase"/>
</dbReference>
<dbReference type="InterPro" id="IPR020630">
    <property type="entry name" value="THF_DH/CycHdrlase_cat_dom"/>
</dbReference>
<dbReference type="InterPro" id="IPR020867">
    <property type="entry name" value="THF_DH/CycHdrlase_CS"/>
</dbReference>
<dbReference type="InterPro" id="IPR020631">
    <property type="entry name" value="THF_DH/CycHdrlase_NAD-bd_dom"/>
</dbReference>
<dbReference type="NCBIfam" id="NF010778">
    <property type="entry name" value="PRK14181.1"/>
    <property type="match status" value="1"/>
</dbReference>
<dbReference type="PANTHER" id="PTHR48099:SF5">
    <property type="entry name" value="C-1-TETRAHYDROFOLATE SYNTHASE, CYTOPLASMIC"/>
    <property type="match status" value="1"/>
</dbReference>
<dbReference type="PANTHER" id="PTHR48099">
    <property type="entry name" value="C-1-TETRAHYDROFOLATE SYNTHASE, CYTOPLASMIC-RELATED"/>
    <property type="match status" value="1"/>
</dbReference>
<dbReference type="Pfam" id="PF00763">
    <property type="entry name" value="THF_DHG_CYH"/>
    <property type="match status" value="1"/>
</dbReference>
<dbReference type="Pfam" id="PF02882">
    <property type="entry name" value="THF_DHG_CYH_C"/>
    <property type="match status" value="1"/>
</dbReference>
<dbReference type="PRINTS" id="PR00085">
    <property type="entry name" value="THFDHDRGNASE"/>
</dbReference>
<dbReference type="SUPFAM" id="SSF53223">
    <property type="entry name" value="Aminoacid dehydrogenase-like, N-terminal domain"/>
    <property type="match status" value="1"/>
</dbReference>
<dbReference type="SUPFAM" id="SSF51735">
    <property type="entry name" value="NAD(P)-binding Rossmann-fold domains"/>
    <property type="match status" value="1"/>
</dbReference>
<dbReference type="PROSITE" id="PS00766">
    <property type="entry name" value="THF_DHG_CYH_1"/>
    <property type="match status" value="1"/>
</dbReference>
<dbReference type="PROSITE" id="PS00767">
    <property type="entry name" value="THF_DHG_CYH_2"/>
    <property type="match status" value="1"/>
</dbReference>
<keyword id="KW-0028">Amino-acid biosynthesis</keyword>
<keyword id="KW-0368">Histidine biosynthesis</keyword>
<keyword id="KW-0378">Hydrolase</keyword>
<keyword id="KW-0486">Methionine biosynthesis</keyword>
<keyword id="KW-0511">Multifunctional enzyme</keyword>
<keyword id="KW-0521">NADP</keyword>
<keyword id="KW-0554">One-carbon metabolism</keyword>
<keyword id="KW-0560">Oxidoreductase</keyword>
<keyword id="KW-0658">Purine biosynthesis</keyword>
<keyword id="KW-1185">Reference proteome</keyword>
<proteinExistence type="inferred from homology"/>
<sequence>MLLKGAPAADHILATIKENIRACSKAPGLAVVLIGNNPASEIYVNMKIKRATDLGMVSKSYRKPSDATLSDILALIHQLNNDENIHGILVQLPLPKHLDAQAILSTITPDKDVDGLHPVNVGKLLLGETDGFIPCTPAGIVELCKYYEIPLHGKHVVILGRSNIVGKPLAALLMQRHADTNASVTLLHSQSEHLTEITRTADILISAIGVPLFVNKEMIAEKTVIMDVGTSRIPAANPKGYILVGDVDFNNVVPVCRAITPVPGGVGPMTVAMLMRNTWESFLRHTS</sequence>
<gene>
    <name evidence="1" type="primary">folD</name>
    <name type="ordered locus">CT_078</name>
</gene>
<evidence type="ECO:0000255" key="1">
    <source>
        <dbReference type="HAMAP-Rule" id="MF_01576"/>
    </source>
</evidence>
<organism>
    <name type="scientific">Chlamydia trachomatis serovar D (strain ATCC VR-885 / DSM 19411 / UW-3/Cx)</name>
    <dbReference type="NCBI Taxonomy" id="272561"/>
    <lineage>
        <taxon>Bacteria</taxon>
        <taxon>Pseudomonadati</taxon>
        <taxon>Chlamydiota</taxon>
        <taxon>Chlamydiia</taxon>
        <taxon>Chlamydiales</taxon>
        <taxon>Chlamydiaceae</taxon>
        <taxon>Chlamydia/Chlamydophila group</taxon>
        <taxon>Chlamydia</taxon>
    </lineage>
</organism>
<accession>O84081</accession>
<name>FOLD_CHLTR</name>
<feature type="chain" id="PRO_0000199305" description="Bifunctional protein FolD">
    <location>
        <begin position="1"/>
        <end position="287"/>
    </location>
</feature>
<feature type="binding site" evidence="1">
    <location>
        <begin position="160"/>
        <end position="162"/>
    </location>
    <ligand>
        <name>NADP(+)</name>
        <dbReference type="ChEBI" id="CHEBI:58349"/>
    </ligand>
</feature>
<feature type="binding site" evidence="1">
    <location>
        <position position="189"/>
    </location>
    <ligand>
        <name>NADP(+)</name>
        <dbReference type="ChEBI" id="CHEBI:58349"/>
    </ligand>
</feature>
<feature type="binding site" evidence="1">
    <location>
        <position position="230"/>
    </location>
    <ligand>
        <name>NADP(+)</name>
        <dbReference type="ChEBI" id="CHEBI:58349"/>
    </ligand>
</feature>
<reference key="1">
    <citation type="journal article" date="1998" name="Science">
        <title>Genome sequence of an obligate intracellular pathogen of humans: Chlamydia trachomatis.</title>
        <authorList>
            <person name="Stephens R.S."/>
            <person name="Kalman S."/>
            <person name="Lammel C.J."/>
            <person name="Fan J."/>
            <person name="Marathe R."/>
            <person name="Aravind L."/>
            <person name="Mitchell W.P."/>
            <person name="Olinger L."/>
            <person name="Tatusov R.L."/>
            <person name="Zhao Q."/>
            <person name="Koonin E.V."/>
            <person name="Davis R.W."/>
        </authorList>
    </citation>
    <scope>NUCLEOTIDE SEQUENCE [LARGE SCALE GENOMIC DNA]</scope>
    <source>
        <strain>ATCC VR-885 / DSM 19411 / UW-3/Cx</strain>
    </source>
</reference>